<evidence type="ECO:0000255" key="1">
    <source>
        <dbReference type="HAMAP-Rule" id="MF_00312"/>
    </source>
</evidence>
<organism>
    <name type="scientific">Haloquadratum walsbyi (strain DSM 16790 / HBSQ001)</name>
    <dbReference type="NCBI Taxonomy" id="362976"/>
    <lineage>
        <taxon>Archaea</taxon>
        <taxon>Methanobacteriati</taxon>
        <taxon>Methanobacteriota</taxon>
        <taxon>Stenosarchaea group</taxon>
        <taxon>Halobacteria</taxon>
        <taxon>Halobacteriales</taxon>
        <taxon>Haloferacaceae</taxon>
        <taxon>Haloquadratum</taxon>
    </lineage>
</organism>
<keyword id="KW-0066">ATP synthesis</keyword>
<keyword id="KW-1003">Cell membrane</keyword>
<keyword id="KW-0375">Hydrogen ion transport</keyword>
<keyword id="KW-0406">Ion transport</keyword>
<keyword id="KW-0472">Membrane</keyword>
<keyword id="KW-1185">Reference proteome</keyword>
<keyword id="KW-0813">Transport</keyword>
<proteinExistence type="inferred from homology"/>
<accession>Q18FB6</accession>
<comment type="function">
    <text evidence="1">Component of the A-type ATP synthase that produces ATP from ADP in the presence of a proton gradient across the membrane.</text>
</comment>
<comment type="subunit">
    <text evidence="1">Has multiple subunits with at least A(3), B(3), C, D, E, F, H, I and proteolipid K(x).</text>
</comment>
<comment type="subcellular location">
    <subcellularLocation>
        <location evidence="1">Cell membrane</location>
        <topology evidence="1">Peripheral membrane protein</topology>
    </subcellularLocation>
</comment>
<comment type="similarity">
    <text evidence="1">Belongs to the V-ATPase F subunit family.</text>
</comment>
<sequence>MSQEIAVVGSPEFTTGFRLAGVRKFETVPDENKDEQLDEAVRSALGDDDVGIIVMHNDDLEHLSRTVREDVETSIEPTLVTLGGGAGAGGLRDQIKRAIGIDLMEEDES</sequence>
<dbReference type="EMBL" id="AM180088">
    <property type="protein sequence ID" value="CAJ53342.1"/>
    <property type="molecule type" value="Genomic_DNA"/>
</dbReference>
<dbReference type="RefSeq" id="WP_011572447.1">
    <property type="nucleotide sequence ID" value="NC_008212.1"/>
</dbReference>
<dbReference type="SMR" id="Q18FB6"/>
<dbReference type="STRING" id="362976.HQ_3245A"/>
<dbReference type="GeneID" id="4193752"/>
<dbReference type="KEGG" id="hwa:HQ_3245A"/>
<dbReference type="eggNOG" id="arCOG04102">
    <property type="taxonomic scope" value="Archaea"/>
</dbReference>
<dbReference type="HOGENOM" id="CLU_135754_2_2_2"/>
<dbReference type="Proteomes" id="UP000001975">
    <property type="component" value="Chromosome"/>
</dbReference>
<dbReference type="GO" id="GO:0005886">
    <property type="term" value="C:plasma membrane"/>
    <property type="evidence" value="ECO:0007669"/>
    <property type="project" value="UniProtKB-SubCell"/>
</dbReference>
<dbReference type="GO" id="GO:0005524">
    <property type="term" value="F:ATP binding"/>
    <property type="evidence" value="ECO:0007669"/>
    <property type="project" value="UniProtKB-UniRule"/>
</dbReference>
<dbReference type="GO" id="GO:0046933">
    <property type="term" value="F:proton-transporting ATP synthase activity, rotational mechanism"/>
    <property type="evidence" value="ECO:0007669"/>
    <property type="project" value="UniProtKB-UniRule"/>
</dbReference>
<dbReference type="GO" id="GO:0046961">
    <property type="term" value="F:proton-transporting ATPase activity, rotational mechanism"/>
    <property type="evidence" value="ECO:0007669"/>
    <property type="project" value="InterPro"/>
</dbReference>
<dbReference type="GO" id="GO:0042777">
    <property type="term" value="P:proton motive force-driven plasma membrane ATP synthesis"/>
    <property type="evidence" value="ECO:0007669"/>
    <property type="project" value="UniProtKB-UniRule"/>
</dbReference>
<dbReference type="Gene3D" id="3.40.50.10580">
    <property type="entry name" value="ATPase, V1 complex, subunit F"/>
    <property type="match status" value="1"/>
</dbReference>
<dbReference type="HAMAP" id="MF_00312">
    <property type="entry name" value="ATP_synth_F_arch"/>
    <property type="match status" value="1"/>
</dbReference>
<dbReference type="InterPro" id="IPR008218">
    <property type="entry name" value="ATPase_V1-cplx_f_g_su"/>
</dbReference>
<dbReference type="InterPro" id="IPR022944">
    <property type="entry name" value="ATPase_V1-cplx_fsu_bac/arc"/>
</dbReference>
<dbReference type="InterPro" id="IPR036906">
    <property type="entry name" value="ATPase_V1_fsu_sf"/>
</dbReference>
<dbReference type="NCBIfam" id="NF002577">
    <property type="entry name" value="PRK02228.1"/>
    <property type="match status" value="1"/>
</dbReference>
<dbReference type="Pfam" id="PF01990">
    <property type="entry name" value="ATP-synt_F"/>
    <property type="match status" value="1"/>
</dbReference>
<dbReference type="SUPFAM" id="SSF159468">
    <property type="entry name" value="AtpF-like"/>
    <property type="match status" value="1"/>
</dbReference>
<reference key="1">
    <citation type="journal article" date="2006" name="BMC Genomics">
        <title>The genome of the square archaeon Haloquadratum walsbyi: life at the limits of water activity.</title>
        <authorList>
            <person name="Bolhuis H."/>
            <person name="Palm P."/>
            <person name="Wende A."/>
            <person name="Falb M."/>
            <person name="Rampp M."/>
            <person name="Rodriguez-Valera F."/>
            <person name="Pfeiffer F."/>
            <person name="Oesterhelt D."/>
        </authorList>
    </citation>
    <scope>NUCLEOTIDE SEQUENCE [LARGE SCALE GENOMIC DNA]</scope>
    <source>
        <strain>DSM 16790 / HBSQ001</strain>
    </source>
</reference>
<protein>
    <recommendedName>
        <fullName evidence="1">A-type ATP synthase subunit F</fullName>
    </recommendedName>
</protein>
<gene>
    <name evidence="1" type="primary">atpF</name>
    <name type="ordered locus">HQ_3245A</name>
</gene>
<name>AATF_HALWD</name>
<feature type="chain" id="PRO_1000059424" description="A-type ATP synthase subunit F">
    <location>
        <begin position="1"/>
        <end position="109"/>
    </location>
</feature>